<comment type="function">
    <text evidence="1">Binds to GC boxes promoters elements. Probable transcriptional activator that has a role in the coordination of changes in transcription required to generate pattern in the developing embryo (By similarity).</text>
</comment>
<comment type="subcellular location">
    <subcellularLocation>
        <location evidence="1">Nucleus</location>
    </subcellularLocation>
</comment>
<comment type="domain">
    <text evidence="4">The 9aaTAD motif is a transactivation domain present in a large number of yeast and animal transcription factors.</text>
</comment>
<comment type="similarity">
    <text evidence="5">Belongs to the Sp1 C2H2-type zinc-finger protein family.</text>
</comment>
<proteinExistence type="evidence at protein level"/>
<accession>Q6BEB4</accession>
<keyword id="KW-0010">Activator</keyword>
<keyword id="KW-0238">DNA-binding</keyword>
<keyword id="KW-0479">Metal-binding</keyword>
<keyword id="KW-0539">Nucleus</keyword>
<keyword id="KW-1267">Proteomics identification</keyword>
<keyword id="KW-1185">Reference proteome</keyword>
<keyword id="KW-0677">Repeat</keyword>
<keyword id="KW-0804">Transcription</keyword>
<keyword id="KW-0805">Transcription regulation</keyword>
<keyword id="KW-0862">Zinc</keyword>
<keyword id="KW-0863">Zinc-finger</keyword>
<name>SP5_HUMAN</name>
<protein>
    <recommendedName>
        <fullName>Transcription factor Sp5</fullName>
    </recommendedName>
</protein>
<organism>
    <name type="scientific">Homo sapiens</name>
    <name type="common">Human</name>
    <dbReference type="NCBI Taxonomy" id="9606"/>
    <lineage>
        <taxon>Eukaryota</taxon>
        <taxon>Metazoa</taxon>
        <taxon>Chordata</taxon>
        <taxon>Craniata</taxon>
        <taxon>Vertebrata</taxon>
        <taxon>Euteleostomi</taxon>
        <taxon>Mammalia</taxon>
        <taxon>Eutheria</taxon>
        <taxon>Euarchontoglires</taxon>
        <taxon>Primates</taxon>
        <taxon>Haplorrhini</taxon>
        <taxon>Catarrhini</taxon>
        <taxon>Hominidae</taxon>
        <taxon>Homo</taxon>
    </lineage>
</organism>
<reference key="1">
    <citation type="submission" date="2002-11" db="EMBL/GenBank/DDBJ databases">
        <title>Isolation of human Sp5 as a direct target of the b-catenin/T-cell factor 4 complex and its frequent elevated expression in colon cancers.</title>
        <authorList>
            <person name="Takahashi M."/>
            <person name="Furukawa Y."/>
            <person name="Nakamura Y."/>
        </authorList>
    </citation>
    <scope>NUCLEOTIDE SEQUENCE [MRNA]</scope>
</reference>
<reference key="2">
    <citation type="journal article" date="2020" name="Cell. Mol. Life Sci.">
        <title>The evolution of the 9aaTAD domain in Sp2 proteins: inactivation with valines and intron reservoirs.</title>
        <authorList>
            <person name="Piskacek M."/>
            <person name="Havelka M."/>
            <person name="Jendruchova K."/>
            <person name="Knight A."/>
            <person name="Keegan L.P."/>
        </authorList>
    </citation>
    <scope>9AATAD MOTIF</scope>
</reference>
<gene>
    <name type="primary">SP5</name>
</gene>
<sequence>MAAVAVLRNDSLQAFLQDRTPSASPDLGKHSPLALLAATCSRIGQPGAAAPPDFLQVPYDPALGSPSRLFHPWTADMPAHSPGALPPPHPSLGLTPQKTHLQPSFGAAHELPLTPPADPSYPYEFSPVKMLPSSMAALPASCAPAYVPYAAQAALPPGYSNLLPPPPPPPPPPTCRQLSPNPAPDDLPWWSIPQAGAGPGASGVPGSGLSGACAGAPHAPRFPASAAAAAAAAAALQRGLVLGPSDFAQYQSQIAALLQTKAPLAATARRCRRCRCPNCQAAGGAPEAEPGKKKQHVCHVPGCGKVYGKTSHLKAHLRWHTGERPFVCNWLFCGKSFTRSDELQRHLRTHTGEKRFACPECGKRFMRSDHLAKHVKTHQNKKLKVAEAGVKREDARDL</sequence>
<evidence type="ECO:0000250" key="1"/>
<evidence type="ECO:0000255" key="2">
    <source>
        <dbReference type="PROSITE-ProRule" id="PRU00042"/>
    </source>
</evidence>
<evidence type="ECO:0000256" key="3">
    <source>
        <dbReference type="SAM" id="MobiDB-lite"/>
    </source>
</evidence>
<evidence type="ECO:0000269" key="4">
    <source>
    </source>
</evidence>
<evidence type="ECO:0000305" key="5"/>
<feature type="chain" id="PRO_0000047146" description="Transcription factor Sp5">
    <location>
        <begin position="1"/>
        <end position="398"/>
    </location>
</feature>
<feature type="zinc finger region" description="C2H2-type 1" evidence="2">
    <location>
        <begin position="296"/>
        <end position="320"/>
    </location>
</feature>
<feature type="zinc finger region" description="C2H2-type 2" evidence="2">
    <location>
        <begin position="326"/>
        <end position="350"/>
    </location>
</feature>
<feature type="zinc finger region" description="C2H2-type 3" evidence="2">
    <location>
        <begin position="356"/>
        <end position="378"/>
    </location>
</feature>
<feature type="region of interest" description="Disordered" evidence="3">
    <location>
        <begin position="160"/>
        <end position="204"/>
    </location>
</feature>
<feature type="short sequence motif" description="9aaTAD" evidence="4">
    <location>
        <begin position="187"/>
        <end position="195"/>
    </location>
</feature>
<feature type="compositionally biased region" description="Pro residues" evidence="3">
    <location>
        <begin position="163"/>
        <end position="174"/>
    </location>
</feature>
<feature type="sequence variant" id="VAR_052713" description="In dbSNP:rs3749036.">
    <original>A</original>
    <variation>T</variation>
    <location>
        <position position="75"/>
    </location>
</feature>
<dbReference type="EMBL" id="AB096175">
    <property type="protein sequence ID" value="BAD34944.1"/>
    <property type="molecule type" value="mRNA"/>
</dbReference>
<dbReference type="CCDS" id="CCDS33322.1"/>
<dbReference type="RefSeq" id="NP_001003845.1">
    <property type="nucleotide sequence ID" value="NM_001003845.3"/>
</dbReference>
<dbReference type="SMR" id="Q6BEB4"/>
<dbReference type="BioGRID" id="132951">
    <property type="interactions" value="4"/>
</dbReference>
<dbReference type="FunCoup" id="Q6BEB4">
    <property type="interactions" value="278"/>
</dbReference>
<dbReference type="IntAct" id="Q6BEB4">
    <property type="interactions" value="1"/>
</dbReference>
<dbReference type="STRING" id="9606.ENSP00000364430"/>
<dbReference type="GlyGen" id="Q6BEB4">
    <property type="glycosylation" value="1 site, 1 O-linked glycan (1 site)"/>
</dbReference>
<dbReference type="iPTMnet" id="Q6BEB4"/>
<dbReference type="PhosphoSitePlus" id="Q6BEB4"/>
<dbReference type="BioMuta" id="SP5"/>
<dbReference type="DMDM" id="74762296"/>
<dbReference type="jPOST" id="Q6BEB4"/>
<dbReference type="MassIVE" id="Q6BEB4"/>
<dbReference type="PaxDb" id="9606-ENSP00000364430"/>
<dbReference type="PeptideAtlas" id="Q6BEB4"/>
<dbReference type="ProteomicsDB" id="66220"/>
<dbReference type="Antibodypedia" id="53490">
    <property type="antibodies" value="46 antibodies from 20 providers"/>
</dbReference>
<dbReference type="DNASU" id="389058"/>
<dbReference type="Ensembl" id="ENST00000375281.4">
    <property type="protein sequence ID" value="ENSP00000364430.3"/>
    <property type="gene ID" value="ENSG00000204335.4"/>
</dbReference>
<dbReference type="GeneID" id="389058"/>
<dbReference type="KEGG" id="hsa:389058"/>
<dbReference type="MANE-Select" id="ENST00000375281.4">
    <property type="protein sequence ID" value="ENSP00000364430.3"/>
    <property type="RefSeq nucleotide sequence ID" value="NM_001003845.3"/>
    <property type="RefSeq protein sequence ID" value="NP_001003845.1"/>
</dbReference>
<dbReference type="UCSC" id="uc002uge.4">
    <property type="organism name" value="human"/>
</dbReference>
<dbReference type="AGR" id="HGNC:14529"/>
<dbReference type="CTD" id="389058"/>
<dbReference type="DisGeNET" id="389058"/>
<dbReference type="GeneCards" id="SP5"/>
<dbReference type="HGNC" id="HGNC:14529">
    <property type="gene designation" value="SP5"/>
</dbReference>
<dbReference type="HPA" id="ENSG00000204335">
    <property type="expression patterns" value="Tissue enhanced (cervix)"/>
</dbReference>
<dbReference type="MIM" id="609391">
    <property type="type" value="gene"/>
</dbReference>
<dbReference type="neXtProt" id="NX_Q6BEB4"/>
<dbReference type="OpenTargets" id="ENSG00000204335"/>
<dbReference type="PharmGKB" id="PA134875843"/>
<dbReference type="VEuPathDB" id="HostDB:ENSG00000204335"/>
<dbReference type="eggNOG" id="KOG1721">
    <property type="taxonomic scope" value="Eukaryota"/>
</dbReference>
<dbReference type="GeneTree" id="ENSGT00940000160673"/>
<dbReference type="HOGENOM" id="CLU_019484_5_0_1"/>
<dbReference type="InParanoid" id="Q6BEB4"/>
<dbReference type="OMA" id="KRFGCAE"/>
<dbReference type="OrthoDB" id="6365676at2759"/>
<dbReference type="PAN-GO" id="Q6BEB4">
    <property type="GO annotations" value="3 GO annotations based on evolutionary models"/>
</dbReference>
<dbReference type="PhylomeDB" id="Q6BEB4"/>
<dbReference type="TreeFam" id="TF350150"/>
<dbReference type="PathwayCommons" id="Q6BEB4"/>
<dbReference type="SignaLink" id="Q6BEB4"/>
<dbReference type="BioGRID-ORCS" id="389058">
    <property type="hits" value="15 hits in 1172 CRISPR screens"/>
</dbReference>
<dbReference type="GenomeRNAi" id="389058"/>
<dbReference type="Pharos" id="Q6BEB4">
    <property type="development level" value="Tdark"/>
</dbReference>
<dbReference type="PRO" id="PR:Q6BEB4"/>
<dbReference type="Proteomes" id="UP000005640">
    <property type="component" value="Chromosome 2"/>
</dbReference>
<dbReference type="RNAct" id="Q6BEB4">
    <property type="molecule type" value="protein"/>
</dbReference>
<dbReference type="Bgee" id="ENSG00000204335">
    <property type="expression patterns" value="Expressed in endocervix and 91 other cell types or tissues"/>
</dbReference>
<dbReference type="GO" id="GO:0000785">
    <property type="term" value="C:chromatin"/>
    <property type="evidence" value="ECO:0000247"/>
    <property type="project" value="NTNU_SB"/>
</dbReference>
<dbReference type="GO" id="GO:0005634">
    <property type="term" value="C:nucleus"/>
    <property type="evidence" value="ECO:0007669"/>
    <property type="project" value="UniProtKB-SubCell"/>
</dbReference>
<dbReference type="GO" id="GO:0000981">
    <property type="term" value="F:DNA-binding transcription factor activity, RNA polymerase II-specific"/>
    <property type="evidence" value="ECO:0000247"/>
    <property type="project" value="NTNU_SB"/>
</dbReference>
<dbReference type="GO" id="GO:0001227">
    <property type="term" value="F:DNA-binding transcription repressor activity, RNA polymerase II-specific"/>
    <property type="evidence" value="ECO:0007669"/>
    <property type="project" value="Ensembl"/>
</dbReference>
<dbReference type="GO" id="GO:0000978">
    <property type="term" value="F:RNA polymerase II cis-regulatory region sequence-specific DNA binding"/>
    <property type="evidence" value="ECO:0000318"/>
    <property type="project" value="GO_Central"/>
</dbReference>
<dbReference type="GO" id="GO:0008270">
    <property type="term" value="F:zinc ion binding"/>
    <property type="evidence" value="ECO:0007669"/>
    <property type="project" value="UniProtKB-KW"/>
</dbReference>
<dbReference type="GO" id="GO:0060349">
    <property type="term" value="P:bone morphogenesis"/>
    <property type="evidence" value="ECO:0007669"/>
    <property type="project" value="Ensembl"/>
</dbReference>
<dbReference type="GO" id="GO:0036342">
    <property type="term" value="P:post-anal tail morphogenesis"/>
    <property type="evidence" value="ECO:0007669"/>
    <property type="project" value="Ensembl"/>
</dbReference>
<dbReference type="GO" id="GO:0006357">
    <property type="term" value="P:regulation of transcription by RNA polymerase II"/>
    <property type="evidence" value="ECO:0000318"/>
    <property type="project" value="GO_Central"/>
</dbReference>
<dbReference type="CDD" id="cd22541">
    <property type="entry name" value="SP5_N"/>
    <property type="match status" value="1"/>
</dbReference>
<dbReference type="FunFam" id="3.30.160.60:FF:000014">
    <property type="entry name" value="Transcription factor Sp3"/>
    <property type="match status" value="1"/>
</dbReference>
<dbReference type="FunFam" id="3.30.160.60:FF:000026">
    <property type="entry name" value="Transcription factor Sp3"/>
    <property type="match status" value="1"/>
</dbReference>
<dbReference type="FunFam" id="3.30.160.60:FF:000061">
    <property type="entry name" value="Transcription factor Sp3"/>
    <property type="match status" value="1"/>
</dbReference>
<dbReference type="Gene3D" id="3.30.160.60">
    <property type="entry name" value="Classic Zinc Finger"/>
    <property type="match status" value="3"/>
</dbReference>
<dbReference type="InterPro" id="IPR036236">
    <property type="entry name" value="Znf_C2H2_sf"/>
</dbReference>
<dbReference type="InterPro" id="IPR013087">
    <property type="entry name" value="Znf_C2H2_type"/>
</dbReference>
<dbReference type="PANTHER" id="PTHR23235">
    <property type="entry name" value="KRUEPPEL-LIKE TRANSCRIPTION FACTOR"/>
    <property type="match status" value="1"/>
</dbReference>
<dbReference type="PANTHER" id="PTHR23235:SF29">
    <property type="entry name" value="TRANSCRIPTION FACTOR SP5"/>
    <property type="match status" value="1"/>
</dbReference>
<dbReference type="Pfam" id="PF00096">
    <property type="entry name" value="zf-C2H2"/>
    <property type="match status" value="3"/>
</dbReference>
<dbReference type="SMART" id="SM00355">
    <property type="entry name" value="ZnF_C2H2"/>
    <property type="match status" value="3"/>
</dbReference>
<dbReference type="SUPFAM" id="SSF57667">
    <property type="entry name" value="beta-beta-alpha zinc fingers"/>
    <property type="match status" value="2"/>
</dbReference>
<dbReference type="PROSITE" id="PS00028">
    <property type="entry name" value="ZINC_FINGER_C2H2_1"/>
    <property type="match status" value="3"/>
</dbReference>
<dbReference type="PROSITE" id="PS50157">
    <property type="entry name" value="ZINC_FINGER_C2H2_2"/>
    <property type="match status" value="3"/>
</dbReference>